<evidence type="ECO:0000250" key="1"/>
<evidence type="ECO:0000305" key="2"/>
<reference key="1">
    <citation type="submission" date="1999-06" db="EMBL/GenBank/DDBJ databases">
        <title>Cloning and sequencing of cDNA that encodes ostrich growth hormone.</title>
        <authorList>
            <person name="Komano T."/>
            <person name="Takebe S."/>
            <person name="Taguchi Y."/>
            <person name="Sakai H."/>
        </authorList>
    </citation>
    <scope>NUCLEOTIDE SEQUENCE [MRNA]</scope>
    <source>
        <tissue>Pituitary</tissue>
    </source>
</reference>
<organism>
    <name type="scientific">Struthio camelus</name>
    <name type="common">Common ostrich</name>
    <dbReference type="NCBI Taxonomy" id="8801"/>
    <lineage>
        <taxon>Eukaryota</taxon>
        <taxon>Metazoa</taxon>
        <taxon>Chordata</taxon>
        <taxon>Craniata</taxon>
        <taxon>Vertebrata</taxon>
        <taxon>Euteleostomi</taxon>
        <taxon>Archelosauria</taxon>
        <taxon>Archosauria</taxon>
        <taxon>Dinosauria</taxon>
        <taxon>Saurischia</taxon>
        <taxon>Theropoda</taxon>
        <taxon>Coelurosauria</taxon>
        <taxon>Aves</taxon>
        <taxon>Palaeognathae</taxon>
        <taxon>Struthioniformes</taxon>
        <taxon>Struthionidae</taxon>
        <taxon>Struthio</taxon>
    </lineage>
</organism>
<accession>Q9PWG3</accession>
<name>SOMA_STRCA</name>
<sequence>MAPGSWFSPLFIAVITLGLQWPKEAATFPAMPLSNLFANAVLRAQHLHLLAAETYKEFERTYIPEEQRHANKNSQSAFCYSETIPAPTGKDDAQQKSDMELLRFSLVLIQSWLTPVQYLSKVFTNNLVFGTSDRVYEKLKDLEEGIQALMRELEDRSSRGPPLLRSTYDKFDIHLRNEEALLKNYGLPSCFKKDLHKVETYLKVMKCRRFGESNCTI</sequence>
<gene>
    <name type="primary">GH</name>
</gene>
<protein>
    <recommendedName>
        <fullName>Somatotropin</fullName>
    </recommendedName>
    <alternativeName>
        <fullName>Growth hormone</fullName>
    </alternativeName>
</protein>
<proteinExistence type="evidence at transcript level"/>
<dbReference type="EMBL" id="AB028191">
    <property type="protein sequence ID" value="BAA82959.1"/>
    <property type="molecule type" value="mRNA"/>
</dbReference>
<dbReference type="SMR" id="Q9PWG3"/>
<dbReference type="GO" id="GO:0005615">
    <property type="term" value="C:extracellular space"/>
    <property type="evidence" value="ECO:0000250"/>
    <property type="project" value="AgBase"/>
</dbReference>
<dbReference type="GO" id="GO:0008083">
    <property type="term" value="F:growth factor activity"/>
    <property type="evidence" value="ECO:0007669"/>
    <property type="project" value="TreeGrafter"/>
</dbReference>
<dbReference type="GO" id="GO:0005131">
    <property type="term" value="F:growth hormone receptor binding"/>
    <property type="evidence" value="ECO:0007669"/>
    <property type="project" value="InterPro"/>
</dbReference>
<dbReference type="GO" id="GO:0005179">
    <property type="term" value="F:hormone activity"/>
    <property type="evidence" value="ECO:0007669"/>
    <property type="project" value="UniProtKB-KW"/>
</dbReference>
<dbReference type="GO" id="GO:0046872">
    <property type="term" value="F:metal ion binding"/>
    <property type="evidence" value="ECO:0007669"/>
    <property type="project" value="UniProtKB-KW"/>
</dbReference>
<dbReference type="GO" id="GO:0048018">
    <property type="term" value="F:receptor ligand activity"/>
    <property type="evidence" value="ECO:0000250"/>
    <property type="project" value="AgBase"/>
</dbReference>
<dbReference type="GO" id="GO:0048513">
    <property type="term" value="P:animal organ development"/>
    <property type="evidence" value="ECO:0007669"/>
    <property type="project" value="TreeGrafter"/>
</dbReference>
<dbReference type="GO" id="GO:0060396">
    <property type="term" value="P:growth hormone receptor signaling pathway"/>
    <property type="evidence" value="ECO:0007669"/>
    <property type="project" value="TreeGrafter"/>
</dbReference>
<dbReference type="GO" id="GO:0043066">
    <property type="term" value="P:negative regulation of apoptotic process"/>
    <property type="evidence" value="ECO:0000250"/>
    <property type="project" value="AgBase"/>
</dbReference>
<dbReference type="GO" id="GO:0010629">
    <property type="term" value="P:negative regulation of gene expression"/>
    <property type="evidence" value="ECO:0000250"/>
    <property type="project" value="AgBase"/>
</dbReference>
<dbReference type="GO" id="GO:0035846">
    <property type="term" value="P:oviduct epithelium development"/>
    <property type="evidence" value="ECO:0000250"/>
    <property type="project" value="AgBase"/>
</dbReference>
<dbReference type="GO" id="GO:0010628">
    <property type="term" value="P:positive regulation of gene expression"/>
    <property type="evidence" value="ECO:0000250"/>
    <property type="project" value="AgBase"/>
</dbReference>
<dbReference type="GO" id="GO:0045927">
    <property type="term" value="P:positive regulation of growth"/>
    <property type="evidence" value="ECO:0007669"/>
    <property type="project" value="TreeGrafter"/>
</dbReference>
<dbReference type="GO" id="GO:0046427">
    <property type="term" value="P:positive regulation of receptor signaling pathway via JAK-STAT"/>
    <property type="evidence" value="ECO:0007669"/>
    <property type="project" value="TreeGrafter"/>
</dbReference>
<dbReference type="GO" id="GO:0031667">
    <property type="term" value="P:response to nutrient levels"/>
    <property type="evidence" value="ECO:0007669"/>
    <property type="project" value="TreeGrafter"/>
</dbReference>
<dbReference type="CDD" id="cd10285">
    <property type="entry name" value="somatotropin_like"/>
    <property type="match status" value="1"/>
</dbReference>
<dbReference type="FunFam" id="1.20.1250.10:FF:000002">
    <property type="entry name" value="Growth hormone"/>
    <property type="match status" value="1"/>
</dbReference>
<dbReference type="Gene3D" id="1.20.1250.10">
    <property type="match status" value="1"/>
</dbReference>
<dbReference type="InterPro" id="IPR009079">
    <property type="entry name" value="4_helix_cytokine-like_core"/>
</dbReference>
<dbReference type="InterPro" id="IPR034975">
    <property type="entry name" value="Somatotropin"/>
</dbReference>
<dbReference type="InterPro" id="IPR001400">
    <property type="entry name" value="Somatotropin/Prolactin"/>
</dbReference>
<dbReference type="InterPro" id="IPR018116">
    <property type="entry name" value="Somatotropin_CS"/>
</dbReference>
<dbReference type="PANTHER" id="PTHR11417:SF2">
    <property type="entry name" value="SOMATOTROPIN"/>
    <property type="match status" value="1"/>
</dbReference>
<dbReference type="PANTHER" id="PTHR11417">
    <property type="entry name" value="SOMATOTROPIN,PROLACTIN"/>
    <property type="match status" value="1"/>
</dbReference>
<dbReference type="Pfam" id="PF00103">
    <property type="entry name" value="Hormone_1"/>
    <property type="match status" value="1"/>
</dbReference>
<dbReference type="PRINTS" id="PR00836">
    <property type="entry name" value="SOMATOTROPIN"/>
</dbReference>
<dbReference type="SUPFAM" id="SSF47266">
    <property type="entry name" value="4-helical cytokines"/>
    <property type="match status" value="1"/>
</dbReference>
<dbReference type="PROSITE" id="PS00266">
    <property type="entry name" value="SOMATOTROPIN_1"/>
    <property type="match status" value="1"/>
</dbReference>
<dbReference type="PROSITE" id="PS00338">
    <property type="entry name" value="SOMATOTROPIN_2"/>
    <property type="match status" value="1"/>
</dbReference>
<comment type="function">
    <text>Growth hormone plays an important role in growth control.</text>
</comment>
<comment type="subcellular location">
    <subcellularLocation>
        <location>Secreted</location>
    </subcellularLocation>
</comment>
<comment type="similarity">
    <text evidence="2">Belongs to the somatotropin/prolactin family.</text>
</comment>
<keyword id="KW-1015">Disulfide bond</keyword>
<keyword id="KW-0372">Hormone</keyword>
<keyword id="KW-0479">Metal-binding</keyword>
<keyword id="KW-0964">Secreted</keyword>
<keyword id="KW-0732">Signal</keyword>
<keyword id="KW-0862">Zinc</keyword>
<feature type="signal peptide" evidence="1">
    <location>
        <begin position="1"/>
        <end position="26"/>
    </location>
</feature>
<feature type="chain" id="PRO_0000033006" description="Somatotropin">
    <location>
        <begin position="27"/>
        <end position="217"/>
    </location>
</feature>
<feature type="binding site" evidence="1">
    <location>
        <position position="46"/>
    </location>
    <ligand>
        <name>Zn(2+)</name>
        <dbReference type="ChEBI" id="CHEBI:29105"/>
    </ligand>
</feature>
<feature type="binding site" evidence="1">
    <location>
        <position position="199"/>
    </location>
    <ligand>
        <name>Zn(2+)</name>
        <dbReference type="ChEBI" id="CHEBI:29105"/>
    </ligand>
</feature>
<feature type="disulfide bond" evidence="1">
    <location>
        <begin position="79"/>
        <end position="190"/>
    </location>
</feature>
<feature type="disulfide bond" evidence="1">
    <location>
        <begin position="207"/>
        <end position="215"/>
    </location>
</feature>